<comment type="function">
    <text evidence="1">Has flap endonuclease activity. During DNA replication, flap endonucleases cleave the 5'-overhanging flap structure that is generated by displacement synthesis when DNA polymerase encounters the 5'-end of a downstream Okazaki fragment.</text>
</comment>
<comment type="cofactor">
    <cofactor evidence="1">
        <name>Mg(2+)</name>
        <dbReference type="ChEBI" id="CHEBI:18420"/>
    </cofactor>
    <text evidence="1">Binds 2 Mg(2+) per subunit. Only one magnesium ion has a direct interaction with the protein, the other interactions are indirect.</text>
</comment>
<comment type="cofactor">
    <cofactor evidence="1">
        <name>K(+)</name>
        <dbReference type="ChEBI" id="CHEBI:29103"/>
    </cofactor>
    <text evidence="1">Binds 1 K(+) per subunit. The potassium ion strongly increases the affinity for DNA.</text>
</comment>
<comment type="similarity">
    <text evidence="1">Belongs to the Xni family.</text>
</comment>
<comment type="sequence caution" evidence="2">
    <conflict type="erroneous initiation">
        <sequence resource="EMBL-CDS" id="ABF04954"/>
    </conflict>
    <text>Extended N-terminus.</text>
</comment>
<evidence type="ECO:0000255" key="1">
    <source>
        <dbReference type="HAMAP-Rule" id="MF_01192"/>
    </source>
</evidence>
<evidence type="ECO:0000305" key="2"/>
<name>XNI_SHIF8</name>
<gene>
    <name evidence="1" type="primary">xni</name>
    <name evidence="1" type="synonym">ygdG</name>
    <name type="ordered locus">SFV_2877</name>
</gene>
<accession>Q0T161</accession>
<organism>
    <name type="scientific">Shigella flexneri serotype 5b (strain 8401)</name>
    <dbReference type="NCBI Taxonomy" id="373384"/>
    <lineage>
        <taxon>Bacteria</taxon>
        <taxon>Pseudomonadati</taxon>
        <taxon>Pseudomonadota</taxon>
        <taxon>Gammaproteobacteria</taxon>
        <taxon>Enterobacterales</taxon>
        <taxon>Enterobacteriaceae</taxon>
        <taxon>Shigella</taxon>
    </lineage>
</organism>
<reference key="1">
    <citation type="journal article" date="2006" name="BMC Genomics">
        <title>Complete genome sequence of Shigella flexneri 5b and comparison with Shigella flexneri 2a.</title>
        <authorList>
            <person name="Nie H."/>
            <person name="Yang F."/>
            <person name="Zhang X."/>
            <person name="Yang J."/>
            <person name="Chen L."/>
            <person name="Wang J."/>
            <person name="Xiong Z."/>
            <person name="Peng J."/>
            <person name="Sun L."/>
            <person name="Dong J."/>
            <person name="Xue Y."/>
            <person name="Xu X."/>
            <person name="Chen S."/>
            <person name="Yao Z."/>
            <person name="Shen Y."/>
            <person name="Jin Q."/>
        </authorList>
    </citation>
    <scope>NUCLEOTIDE SEQUENCE [LARGE SCALE GENOMIC DNA]</scope>
    <source>
        <strain>8401</strain>
    </source>
</reference>
<proteinExistence type="inferred from homology"/>
<sequence length="251" mass="28194">MAVHLLIVDALNLIRRIHAVQGSPCVETCQHALDQLIMHSQPTHAVAVFDDENRSSGWRHQRLPDYKADRPPMPEELHDEMPALRAAFEQRGVPCWSASGNEADDLAATLAVKVTQAGHQATIVSTDKGYCQLLSPTLRIRDYFQKRWLDAPFIDKEFGVQPQQLPDYWGLAGISSSKVPGVAGIGPKSATQLLVEFQSLEGIYENLDAVAEKWRKKLETHKEMAFLCRDIARLQTDLHIDGNLQQLRLVR</sequence>
<keyword id="KW-0238">DNA-binding</keyword>
<keyword id="KW-0255">Endonuclease</keyword>
<keyword id="KW-0378">Hydrolase</keyword>
<keyword id="KW-0460">Magnesium</keyword>
<keyword id="KW-0479">Metal-binding</keyword>
<keyword id="KW-0540">Nuclease</keyword>
<keyword id="KW-0630">Potassium</keyword>
<protein>
    <recommendedName>
        <fullName evidence="1">Flap endonuclease Xni</fullName>
        <shortName evidence="1">FEN</shortName>
        <ecNumber evidence="1">3.1.-.-</ecNumber>
    </recommendedName>
</protein>
<feature type="chain" id="PRO_0000297885" description="Flap endonuclease Xni">
    <location>
        <begin position="1"/>
        <end position="251"/>
    </location>
</feature>
<feature type="domain" description="5'-3' exonuclease" evidence="1">
    <location>
        <begin position="160"/>
        <end position="249"/>
    </location>
</feature>
<feature type="region of interest" description="Interaction with DNA" evidence="1">
    <location>
        <begin position="184"/>
        <end position="189"/>
    </location>
</feature>
<feature type="binding site" evidence="1">
    <location>
        <position position="104"/>
    </location>
    <ligand>
        <name>Mg(2+)</name>
        <dbReference type="ChEBI" id="CHEBI:18420"/>
    </ligand>
</feature>
<feature type="binding site" evidence="1">
    <location>
        <position position="171"/>
    </location>
    <ligand>
        <name>K(+)</name>
        <dbReference type="ChEBI" id="CHEBI:29103"/>
    </ligand>
</feature>
<feature type="binding site" evidence="1">
    <location>
        <position position="172"/>
    </location>
    <ligand>
        <name>K(+)</name>
        <dbReference type="ChEBI" id="CHEBI:29103"/>
    </ligand>
</feature>
<feature type="binding site" evidence="1">
    <location>
        <position position="180"/>
    </location>
    <ligand>
        <name>K(+)</name>
        <dbReference type="ChEBI" id="CHEBI:29103"/>
    </ligand>
</feature>
<feature type="binding site" evidence="1">
    <location>
        <position position="182"/>
    </location>
    <ligand>
        <name>K(+)</name>
        <dbReference type="ChEBI" id="CHEBI:29103"/>
    </ligand>
</feature>
<feature type="binding site" evidence="1">
    <location>
        <position position="185"/>
    </location>
    <ligand>
        <name>K(+)</name>
        <dbReference type="ChEBI" id="CHEBI:29103"/>
    </ligand>
</feature>
<dbReference type="EC" id="3.1.-.-" evidence="1"/>
<dbReference type="EMBL" id="CP000266">
    <property type="protein sequence ID" value="ABF04954.1"/>
    <property type="status" value="ALT_INIT"/>
    <property type="molecule type" value="Genomic_DNA"/>
</dbReference>
<dbReference type="RefSeq" id="WP_005051589.1">
    <property type="nucleotide sequence ID" value="NC_008258.1"/>
</dbReference>
<dbReference type="SMR" id="Q0T161"/>
<dbReference type="KEGG" id="sfv:SFV_2877"/>
<dbReference type="HOGENOM" id="CLU_004675_1_2_6"/>
<dbReference type="Proteomes" id="UP000000659">
    <property type="component" value="Chromosome"/>
</dbReference>
<dbReference type="GO" id="GO:0008409">
    <property type="term" value="F:5'-3' exonuclease activity"/>
    <property type="evidence" value="ECO:0007669"/>
    <property type="project" value="InterPro"/>
</dbReference>
<dbReference type="GO" id="GO:0017108">
    <property type="term" value="F:5'-flap endonuclease activity"/>
    <property type="evidence" value="ECO:0007669"/>
    <property type="project" value="UniProtKB-UniRule"/>
</dbReference>
<dbReference type="GO" id="GO:0003677">
    <property type="term" value="F:DNA binding"/>
    <property type="evidence" value="ECO:0007669"/>
    <property type="project" value="UniProtKB-UniRule"/>
</dbReference>
<dbReference type="GO" id="GO:0000287">
    <property type="term" value="F:magnesium ion binding"/>
    <property type="evidence" value="ECO:0007669"/>
    <property type="project" value="UniProtKB-UniRule"/>
</dbReference>
<dbReference type="GO" id="GO:0030955">
    <property type="term" value="F:potassium ion binding"/>
    <property type="evidence" value="ECO:0007669"/>
    <property type="project" value="UniProtKB-UniRule"/>
</dbReference>
<dbReference type="GO" id="GO:0033567">
    <property type="term" value="P:DNA replication, Okazaki fragment processing"/>
    <property type="evidence" value="ECO:0007669"/>
    <property type="project" value="UniProtKB-UniRule"/>
</dbReference>
<dbReference type="CDD" id="cd09898">
    <property type="entry name" value="H3TH_53EXO"/>
    <property type="match status" value="1"/>
</dbReference>
<dbReference type="CDD" id="cd09859">
    <property type="entry name" value="PIN_53EXO"/>
    <property type="match status" value="1"/>
</dbReference>
<dbReference type="FunFam" id="1.10.150.20:FF:000003">
    <property type="entry name" value="DNA polymerase I"/>
    <property type="match status" value="1"/>
</dbReference>
<dbReference type="FunFam" id="3.40.50.1010:FF:000011">
    <property type="entry name" value="Flap endonuclease Xni"/>
    <property type="match status" value="1"/>
</dbReference>
<dbReference type="Gene3D" id="1.10.150.20">
    <property type="entry name" value="5' to 3' exonuclease, C-terminal subdomain"/>
    <property type="match status" value="1"/>
</dbReference>
<dbReference type="Gene3D" id="3.40.50.1010">
    <property type="entry name" value="5'-nuclease"/>
    <property type="match status" value="1"/>
</dbReference>
<dbReference type="HAMAP" id="MF_01192">
    <property type="entry name" value="Xni"/>
    <property type="match status" value="1"/>
</dbReference>
<dbReference type="InterPro" id="IPR020046">
    <property type="entry name" value="5-3_exonucl_a-hlix_arch_N"/>
</dbReference>
<dbReference type="InterPro" id="IPR002421">
    <property type="entry name" value="5-3_exonuclease"/>
</dbReference>
<dbReference type="InterPro" id="IPR036279">
    <property type="entry name" value="5-3_exonuclease_C_sf"/>
</dbReference>
<dbReference type="InterPro" id="IPR020045">
    <property type="entry name" value="DNA_polI_H3TH"/>
</dbReference>
<dbReference type="InterPro" id="IPR038969">
    <property type="entry name" value="FEN"/>
</dbReference>
<dbReference type="InterPro" id="IPR008918">
    <property type="entry name" value="HhH2"/>
</dbReference>
<dbReference type="InterPro" id="IPR029060">
    <property type="entry name" value="PIN-like_dom_sf"/>
</dbReference>
<dbReference type="InterPro" id="IPR022895">
    <property type="entry name" value="Xni"/>
</dbReference>
<dbReference type="NCBIfam" id="NF007017">
    <property type="entry name" value="PRK09482.1"/>
    <property type="match status" value="1"/>
</dbReference>
<dbReference type="PANTHER" id="PTHR42646:SF2">
    <property type="entry name" value="5'-3' EXONUCLEASE FAMILY PROTEIN"/>
    <property type="match status" value="1"/>
</dbReference>
<dbReference type="PANTHER" id="PTHR42646">
    <property type="entry name" value="FLAP ENDONUCLEASE XNI"/>
    <property type="match status" value="1"/>
</dbReference>
<dbReference type="Pfam" id="PF01367">
    <property type="entry name" value="5_3_exonuc"/>
    <property type="match status" value="1"/>
</dbReference>
<dbReference type="Pfam" id="PF02739">
    <property type="entry name" value="5_3_exonuc_N"/>
    <property type="match status" value="1"/>
</dbReference>
<dbReference type="SMART" id="SM00475">
    <property type="entry name" value="53EXOc"/>
    <property type="match status" value="1"/>
</dbReference>
<dbReference type="SMART" id="SM00279">
    <property type="entry name" value="HhH2"/>
    <property type="match status" value="1"/>
</dbReference>
<dbReference type="SUPFAM" id="SSF47807">
    <property type="entry name" value="5' to 3' exonuclease, C-terminal subdomain"/>
    <property type="match status" value="1"/>
</dbReference>
<dbReference type="SUPFAM" id="SSF88723">
    <property type="entry name" value="PIN domain-like"/>
    <property type="match status" value="1"/>
</dbReference>